<feature type="chain" id="PRO_0000114778" description="Homocysteine synthase">
    <location>
        <begin position="1"/>
        <end position="429"/>
    </location>
</feature>
<feature type="modified residue" description="N6-(pyridoxal phosphate)lysine" evidence="2">
    <location>
        <position position="210"/>
    </location>
</feature>
<feature type="mutagenesis site" description="Impairs homocysteine synthase activity." evidence="5">
    <original>G</original>
    <variation>D</variation>
    <location>
        <position position="411"/>
    </location>
</feature>
<dbReference type="EC" id="2.5.1.49" evidence="3 6"/>
<dbReference type="EMBL" id="AF012876">
    <property type="protein sequence ID" value="AAB66879.1"/>
    <property type="molecule type" value="mRNA"/>
</dbReference>
<dbReference type="EMBL" id="CU329671">
    <property type="protein sequence ID" value="CAA22286.1"/>
    <property type="molecule type" value="Genomic_DNA"/>
</dbReference>
<dbReference type="PIR" id="T40463">
    <property type="entry name" value="T40463"/>
</dbReference>
<dbReference type="RefSeq" id="NP_595189.1">
    <property type="nucleotide sequence ID" value="NM_001021096.2"/>
</dbReference>
<dbReference type="SMR" id="O13326"/>
<dbReference type="BioGRID" id="277366">
    <property type="interactions" value="9"/>
</dbReference>
<dbReference type="FunCoup" id="O13326">
    <property type="interactions" value="204"/>
</dbReference>
<dbReference type="STRING" id="284812.O13326"/>
<dbReference type="iPTMnet" id="O13326"/>
<dbReference type="PaxDb" id="4896-SPBC428.11.1"/>
<dbReference type="EnsemblFungi" id="SPBC428.11.1">
    <property type="protein sequence ID" value="SPBC428.11.1:pep"/>
    <property type="gene ID" value="SPBC428.11"/>
</dbReference>
<dbReference type="GeneID" id="2540849"/>
<dbReference type="KEGG" id="spo:2540849"/>
<dbReference type="PomBase" id="SPBC428.11">
    <property type="gene designation" value="met17"/>
</dbReference>
<dbReference type="VEuPathDB" id="FungiDB:SPBC428.11"/>
<dbReference type="eggNOG" id="KOG0053">
    <property type="taxonomic scope" value="Eukaryota"/>
</dbReference>
<dbReference type="HOGENOM" id="CLU_018986_4_0_1"/>
<dbReference type="InParanoid" id="O13326"/>
<dbReference type="OMA" id="NAFQIIQ"/>
<dbReference type="PhylomeDB" id="O13326"/>
<dbReference type="PRO" id="PR:O13326"/>
<dbReference type="Proteomes" id="UP000002485">
    <property type="component" value="Chromosome II"/>
</dbReference>
<dbReference type="GO" id="GO:0005829">
    <property type="term" value="C:cytosol"/>
    <property type="evidence" value="ECO:0007005"/>
    <property type="project" value="PomBase"/>
</dbReference>
<dbReference type="GO" id="GO:0005634">
    <property type="term" value="C:nucleus"/>
    <property type="evidence" value="ECO:0007005"/>
    <property type="project" value="PomBase"/>
</dbReference>
<dbReference type="GO" id="GO:0004124">
    <property type="term" value="F:cysteine synthase activity"/>
    <property type="evidence" value="ECO:0000315"/>
    <property type="project" value="PomBase"/>
</dbReference>
<dbReference type="GO" id="GO:0051009">
    <property type="term" value="F:O-acetylhomoserine sulfhydrylase activity"/>
    <property type="evidence" value="ECO:0007669"/>
    <property type="project" value="RHEA"/>
</dbReference>
<dbReference type="GO" id="GO:0030170">
    <property type="term" value="F:pyridoxal phosphate binding"/>
    <property type="evidence" value="ECO:0007669"/>
    <property type="project" value="InterPro"/>
</dbReference>
<dbReference type="GO" id="GO:0019343">
    <property type="term" value="P:cysteine biosynthetic process via cystathionine"/>
    <property type="evidence" value="ECO:0000315"/>
    <property type="project" value="PomBase"/>
</dbReference>
<dbReference type="GO" id="GO:0071269">
    <property type="term" value="P:L-homocysteine biosynthetic process"/>
    <property type="evidence" value="ECO:0000318"/>
    <property type="project" value="GO_Central"/>
</dbReference>
<dbReference type="GO" id="GO:0006555">
    <property type="term" value="P:methionine metabolic process"/>
    <property type="evidence" value="ECO:0000303"/>
    <property type="project" value="PomBase"/>
</dbReference>
<dbReference type="GO" id="GO:0019346">
    <property type="term" value="P:transsulfuration"/>
    <property type="evidence" value="ECO:0007669"/>
    <property type="project" value="InterPro"/>
</dbReference>
<dbReference type="CDD" id="cd00614">
    <property type="entry name" value="CGS_like"/>
    <property type="match status" value="1"/>
</dbReference>
<dbReference type="FunFam" id="3.90.1150.10:FF:000083">
    <property type="entry name" value="O-acetylhomoserine sulfhydrylase"/>
    <property type="match status" value="1"/>
</dbReference>
<dbReference type="FunFam" id="3.40.640.10:FF:000035">
    <property type="entry name" value="O-succinylhomoserine sulfhydrylase"/>
    <property type="match status" value="1"/>
</dbReference>
<dbReference type="Gene3D" id="3.90.1150.10">
    <property type="entry name" value="Aspartate Aminotransferase, domain 1"/>
    <property type="match status" value="1"/>
</dbReference>
<dbReference type="Gene3D" id="3.40.640.10">
    <property type="entry name" value="Type I PLP-dependent aspartate aminotransferase-like (Major domain)"/>
    <property type="match status" value="1"/>
</dbReference>
<dbReference type="InterPro" id="IPR000277">
    <property type="entry name" value="Cys/Met-Metab_PyrdxlP-dep_enz"/>
</dbReference>
<dbReference type="InterPro" id="IPR054542">
    <property type="entry name" value="Cys_met_metab_PP"/>
</dbReference>
<dbReference type="InterPro" id="IPR006235">
    <property type="entry name" value="OAc-hSer/O-AcSer_sulfhydrylase"/>
</dbReference>
<dbReference type="InterPro" id="IPR015424">
    <property type="entry name" value="PyrdxlP-dep_Trfase"/>
</dbReference>
<dbReference type="InterPro" id="IPR015421">
    <property type="entry name" value="PyrdxlP-dep_Trfase_major"/>
</dbReference>
<dbReference type="InterPro" id="IPR015422">
    <property type="entry name" value="PyrdxlP-dep_Trfase_small"/>
</dbReference>
<dbReference type="NCBIfam" id="TIGR01326">
    <property type="entry name" value="OAH_OAS_sulfhy"/>
    <property type="match status" value="1"/>
</dbReference>
<dbReference type="PANTHER" id="PTHR43797">
    <property type="entry name" value="HOMOCYSTEINE/CYSTEINE SYNTHASE"/>
    <property type="match status" value="1"/>
</dbReference>
<dbReference type="PANTHER" id="PTHR43797:SF2">
    <property type="entry name" value="HOMOCYSTEINE_CYSTEINE SYNTHASE"/>
    <property type="match status" value="1"/>
</dbReference>
<dbReference type="Pfam" id="PF01053">
    <property type="entry name" value="Cys_Met_Meta_PP"/>
    <property type="match status" value="1"/>
</dbReference>
<dbReference type="PIRSF" id="PIRSF001434">
    <property type="entry name" value="CGS"/>
    <property type="match status" value="1"/>
</dbReference>
<dbReference type="SUPFAM" id="SSF53383">
    <property type="entry name" value="PLP-dependent transferases"/>
    <property type="match status" value="1"/>
</dbReference>
<dbReference type="PROSITE" id="PS00868">
    <property type="entry name" value="CYS_MET_METAB_PP"/>
    <property type="match status" value="1"/>
</dbReference>
<comment type="function">
    <text evidence="3 6 11">Catalyzes the conversion of O-acetyl-L-homoserine (OAH) into homocysteine in the methionine biosynthesis pathway (PubMed:11754480, PubMed:6526818). Can also use O-succinyl-L-homoserine and L-homoserine as substrates (PubMed:6526818). Also has cysteine synthase (O-acetylserine sulfhydrylase) activity in vitro, but in S.pombe, it seems only to be involved in the alternative pathway of methionine biosynthesis under cysteine deficiency conditions (PubMed:11754480).</text>
</comment>
<comment type="catalytic activity">
    <reaction evidence="3 6">
        <text>O-acetyl-L-homoserine + methanethiol = L-methionine + acetate + H(+)</text>
        <dbReference type="Rhea" id="RHEA:10048"/>
        <dbReference type="ChEBI" id="CHEBI:15378"/>
        <dbReference type="ChEBI" id="CHEBI:16007"/>
        <dbReference type="ChEBI" id="CHEBI:30089"/>
        <dbReference type="ChEBI" id="CHEBI:57716"/>
        <dbReference type="ChEBI" id="CHEBI:57844"/>
        <dbReference type="EC" id="2.5.1.49"/>
    </reaction>
</comment>
<comment type="catalytic activity">
    <reaction evidence="1">
        <text>O-acetyl-L-homoserine + hydrogen sulfide = L-homocysteine + acetate</text>
        <dbReference type="Rhea" id="RHEA:27822"/>
        <dbReference type="ChEBI" id="CHEBI:29919"/>
        <dbReference type="ChEBI" id="CHEBI:30089"/>
        <dbReference type="ChEBI" id="CHEBI:57716"/>
        <dbReference type="ChEBI" id="CHEBI:58199"/>
        <dbReference type="EC" id="2.5.1.49"/>
    </reaction>
</comment>
<comment type="cofactor">
    <cofactor evidence="6">
        <name>pyridoxal 5'-phosphate</name>
        <dbReference type="ChEBI" id="CHEBI:597326"/>
    </cofactor>
</comment>
<comment type="biophysicochemical properties">
    <kinetics>
        <KM evidence="6">12.5 mM for O-acetyl-L-homoserine</KM>
        <KM evidence="6">11.1 mM for O-succinyl-L-homoserine</KM>
        <KM evidence="6">10.4 mM for L-homoserine</KM>
        <KM evidence="6">0.053 mM for H(2)S</KM>
        <Vmax evidence="6">15.5 umol/min/mg enzyme for O-acetyl-L-homoserine</Vmax>
        <Vmax evidence="6">6.2 umol/min/mg enzyme for O-succinyl-L-homoserinee</Vmax>
        <Vmax evidence="6">2.5 umol/min/mg enzyme for L-homoserine</Vmax>
    </kinetics>
    <phDependence>
        <text evidence="6">Optimum pH is 8.</text>
    </phDependence>
</comment>
<comment type="pathway">
    <text evidence="11">Amino-acid biosynthesis; L-methionine biosynthesis via de novo pathway; L-homocysteine from O-acetyl-L-homoserine.</text>
</comment>
<comment type="subunit">
    <text evidence="12">Homotetramer.</text>
</comment>
<comment type="subcellular location">
    <subcellularLocation>
        <location evidence="4">Cytoplasm</location>
    </subcellularLocation>
    <subcellularLocation>
        <location evidence="4">Nucleus</location>
    </subcellularLocation>
</comment>
<comment type="induction">
    <text evidence="3">Repressed by cysteine.</text>
</comment>
<comment type="similarity">
    <text evidence="10">Belongs to the trans-sulfuration enzymes family.</text>
</comment>
<name>CYSD_SCHPO</name>
<keyword id="KW-0028">Amino-acid biosynthesis</keyword>
<keyword id="KW-0963">Cytoplasm</keyword>
<keyword id="KW-0486">Methionine biosynthesis</keyword>
<keyword id="KW-0539">Nucleus</keyword>
<keyword id="KW-0663">Pyridoxal phosphate</keyword>
<keyword id="KW-1185">Reference proteome</keyword>
<keyword id="KW-0808">Transferase</keyword>
<sequence>MPVESEHFETLQLHAGQEPDAATSSRAVPIYATTSYVFRDCDHGGRLFGLQEPGYIYSRMMNPTADVFEKRIAALEHGAAAIATSSGTSALFMALTTLAKAGDNIVSTSYLYGGTYNLFKVTLPRLGITTKFVNGDDPNDLAAQIDENTKAVYVESIGNPMYNVPDFERIAEVAHAAGVPLMVDNTFGGGGYLVRPIDHGADIVTHSATKWIGGHGTTIGGVIVDSGKFDWKKNSKRFPEFNEPHPGYHGMVFTETFGNLAYAFACRTQTLRDVGGNANPFGVFLLLQGLETLSLRMERHVQNAFALAKYLEKHPKVNWVSYPGLESHVSHKLAKKYLKNGYGAVLSFGAKGGPDQSRKVVNALKLASQLANVGDAKTLVIAPAYTTHLQLTDEEQISAGVTKDLIRVAVGIEHIDDIIADFAQALEVA</sequence>
<evidence type="ECO:0000250" key="1">
    <source>
        <dbReference type="UniProtKB" id="P06106"/>
    </source>
</evidence>
<evidence type="ECO:0000250" key="2">
    <source>
        <dbReference type="UniProtKB" id="P06721"/>
    </source>
</evidence>
<evidence type="ECO:0000269" key="3">
    <source>
    </source>
</evidence>
<evidence type="ECO:0000269" key="4">
    <source>
    </source>
</evidence>
<evidence type="ECO:0000269" key="5">
    <source>
    </source>
</evidence>
<evidence type="ECO:0000269" key="6">
    <source>
    </source>
</evidence>
<evidence type="ECO:0000303" key="7">
    <source>
    </source>
</evidence>
<evidence type="ECO:0000303" key="8">
    <source>
    </source>
</evidence>
<evidence type="ECO:0000303" key="9">
    <source>
    </source>
</evidence>
<evidence type="ECO:0000305" key="10"/>
<evidence type="ECO:0000305" key="11">
    <source>
    </source>
</evidence>
<evidence type="ECO:0000305" key="12">
    <source>
    </source>
</evidence>
<evidence type="ECO:0000312" key="13">
    <source>
        <dbReference type="PomBase" id="SPBC428.11"/>
    </source>
</evidence>
<proteinExistence type="evidence at protein level"/>
<gene>
    <name evidence="1" type="primary">met17</name>
    <name evidence="8" type="synonym">cys2</name>
    <name evidence="13" type="ORF">SPBC428.11</name>
</gene>
<reference key="1">
    <citation type="journal article" date="2002" name="Yeast">
        <title>Sulphur amino acid synthesis in Schizosaccharomyces pombe represents a specific variant of sulphur metabolism in fungi.</title>
        <authorList>
            <person name="Brzywczy J."/>
            <person name="Sienko M."/>
            <person name="Kucharska A."/>
            <person name="Paszewski A."/>
        </authorList>
    </citation>
    <scope>NUCLEOTIDE SEQUENCE [MRNA]</scope>
    <scope>FUNCTION</scope>
    <scope>CATALYTIC ACTIVITY</scope>
    <scope>INDUCTION</scope>
</reference>
<reference key="2">
    <citation type="journal article" date="2002" name="Nature">
        <title>The genome sequence of Schizosaccharomyces pombe.</title>
        <authorList>
            <person name="Wood V."/>
            <person name="Gwilliam R."/>
            <person name="Rajandream M.A."/>
            <person name="Lyne M.H."/>
            <person name="Lyne R."/>
            <person name="Stewart A."/>
            <person name="Sgouros J.G."/>
            <person name="Peat N."/>
            <person name="Hayles J."/>
            <person name="Baker S.G."/>
            <person name="Basham D."/>
            <person name="Bowman S."/>
            <person name="Brooks K."/>
            <person name="Brown D."/>
            <person name="Brown S."/>
            <person name="Chillingworth T."/>
            <person name="Churcher C.M."/>
            <person name="Collins M."/>
            <person name="Connor R."/>
            <person name="Cronin A."/>
            <person name="Davis P."/>
            <person name="Feltwell T."/>
            <person name="Fraser A."/>
            <person name="Gentles S."/>
            <person name="Goble A."/>
            <person name="Hamlin N."/>
            <person name="Harris D.E."/>
            <person name="Hidalgo J."/>
            <person name="Hodgson G."/>
            <person name="Holroyd S."/>
            <person name="Hornsby T."/>
            <person name="Howarth S."/>
            <person name="Huckle E.J."/>
            <person name="Hunt S."/>
            <person name="Jagels K."/>
            <person name="James K.D."/>
            <person name="Jones L."/>
            <person name="Jones M."/>
            <person name="Leather S."/>
            <person name="McDonald S."/>
            <person name="McLean J."/>
            <person name="Mooney P."/>
            <person name="Moule S."/>
            <person name="Mungall K.L."/>
            <person name="Murphy L.D."/>
            <person name="Niblett D."/>
            <person name="Odell C."/>
            <person name="Oliver K."/>
            <person name="O'Neil S."/>
            <person name="Pearson D."/>
            <person name="Quail M.A."/>
            <person name="Rabbinowitsch E."/>
            <person name="Rutherford K.M."/>
            <person name="Rutter S."/>
            <person name="Saunders D."/>
            <person name="Seeger K."/>
            <person name="Sharp S."/>
            <person name="Skelton J."/>
            <person name="Simmonds M.N."/>
            <person name="Squares R."/>
            <person name="Squares S."/>
            <person name="Stevens K."/>
            <person name="Taylor K."/>
            <person name="Taylor R.G."/>
            <person name="Tivey A."/>
            <person name="Walsh S.V."/>
            <person name="Warren T."/>
            <person name="Whitehead S."/>
            <person name="Woodward J.R."/>
            <person name="Volckaert G."/>
            <person name="Aert R."/>
            <person name="Robben J."/>
            <person name="Grymonprez B."/>
            <person name="Weltjens I."/>
            <person name="Vanstreels E."/>
            <person name="Rieger M."/>
            <person name="Schaefer M."/>
            <person name="Mueller-Auer S."/>
            <person name="Gabel C."/>
            <person name="Fuchs M."/>
            <person name="Duesterhoeft A."/>
            <person name="Fritzc C."/>
            <person name="Holzer E."/>
            <person name="Moestl D."/>
            <person name="Hilbert H."/>
            <person name="Borzym K."/>
            <person name="Langer I."/>
            <person name="Beck A."/>
            <person name="Lehrach H."/>
            <person name="Reinhardt R."/>
            <person name="Pohl T.M."/>
            <person name="Eger P."/>
            <person name="Zimmermann W."/>
            <person name="Wedler H."/>
            <person name="Wambutt R."/>
            <person name="Purnelle B."/>
            <person name="Goffeau A."/>
            <person name="Cadieu E."/>
            <person name="Dreano S."/>
            <person name="Gloux S."/>
            <person name="Lelaure V."/>
            <person name="Mottier S."/>
            <person name="Galibert F."/>
            <person name="Aves S.J."/>
            <person name="Xiang Z."/>
            <person name="Hunt C."/>
            <person name="Moore K."/>
            <person name="Hurst S.M."/>
            <person name="Lucas M."/>
            <person name="Rochet M."/>
            <person name="Gaillardin C."/>
            <person name="Tallada V.A."/>
            <person name="Garzon A."/>
            <person name="Thode G."/>
            <person name="Daga R.R."/>
            <person name="Cruzado L."/>
            <person name="Jimenez J."/>
            <person name="Sanchez M."/>
            <person name="del Rey F."/>
            <person name="Benito J."/>
            <person name="Dominguez A."/>
            <person name="Revuelta J.L."/>
            <person name="Moreno S."/>
            <person name="Armstrong J."/>
            <person name="Forsburg S.L."/>
            <person name="Cerutti L."/>
            <person name="Lowe T."/>
            <person name="McCombie W.R."/>
            <person name="Paulsen I."/>
            <person name="Potashkin J."/>
            <person name="Shpakovski G.V."/>
            <person name="Ussery D."/>
            <person name="Barrell B.G."/>
            <person name="Nurse P."/>
        </authorList>
    </citation>
    <scope>NUCLEOTIDE SEQUENCE [LARGE SCALE GENOMIC DNA]</scope>
    <source>
        <strain>972 / ATCC 24843</strain>
    </source>
</reference>
<reference key="3">
    <citation type="journal article" date="1984" name="J. Biochem.">
        <title>O-acetylhomoserine sulfhydrylase of the fission yeast Schizosaccharomyces pombe: partial purification, characterization, and its probable role in homocysteine biosynthesis.</title>
        <authorList>
            <person name="Yamagata S."/>
        </authorList>
    </citation>
    <scope>FUNCTION</scope>
    <scope>CATALYTIC ACTIVITY</scope>
    <scope>BIOPHYSICOCHEMICAL PROPERTIES</scope>
    <scope>COFACTOR</scope>
    <scope>SUBUNIT</scope>
</reference>
<reference key="4">
    <citation type="journal article" date="2006" name="Nat. Biotechnol.">
        <title>ORFeome cloning and global analysis of protein localization in the fission yeast Schizosaccharomyces pombe.</title>
        <authorList>
            <person name="Matsuyama A."/>
            <person name="Arai R."/>
            <person name="Yashiroda Y."/>
            <person name="Shirai A."/>
            <person name="Kamata A."/>
            <person name="Sekido S."/>
            <person name="Kobayashi Y."/>
            <person name="Hashimoto A."/>
            <person name="Hamamoto M."/>
            <person name="Hiraoka Y."/>
            <person name="Horinouchi S."/>
            <person name="Yoshida M."/>
        </authorList>
    </citation>
    <scope>SUBCELLULAR LOCATION [LARGE SCALE ANALYSIS]</scope>
</reference>
<reference key="5">
    <citation type="journal article" date="2007" name="Res. Microbiol.">
        <title>Multiple fungal enzymes possess cysteine synthase activity in vitro.</title>
        <authorList>
            <person name="Brzywczy J."/>
            <person name="Natorff R."/>
            <person name="Sienko M."/>
            <person name="Paszewski A."/>
        </authorList>
    </citation>
    <scope>MUTAGENESIS OF GLY-411</scope>
</reference>
<organism>
    <name type="scientific">Schizosaccharomyces pombe (strain 972 / ATCC 24843)</name>
    <name type="common">Fission yeast</name>
    <dbReference type="NCBI Taxonomy" id="284812"/>
    <lineage>
        <taxon>Eukaryota</taxon>
        <taxon>Fungi</taxon>
        <taxon>Dikarya</taxon>
        <taxon>Ascomycota</taxon>
        <taxon>Taphrinomycotina</taxon>
        <taxon>Schizosaccharomycetes</taxon>
        <taxon>Schizosaccharomycetales</taxon>
        <taxon>Schizosaccharomycetaceae</taxon>
        <taxon>Schizosaccharomyces</taxon>
    </lineage>
</organism>
<protein>
    <recommendedName>
        <fullName evidence="7">Homocysteine synthase</fullName>
        <ecNumber evidence="3 6">2.5.1.49</ecNumber>
    </recommendedName>
    <alternativeName>
        <fullName evidence="7 9">O-acetylhomoserine sulfhydrylase</fullName>
        <shortName evidence="7">OAH SHL</shortName>
        <shortName evidence="9">OAH sulfhydrylase</shortName>
    </alternativeName>
</protein>
<accession>O13326</accession>